<accession>Q45XI6</accession>
<organism>
    <name type="scientific">Procavia capensis</name>
    <name type="common">Rock hyrax</name>
    <dbReference type="NCBI Taxonomy" id="9813"/>
    <lineage>
        <taxon>Eukaryota</taxon>
        <taxon>Metazoa</taxon>
        <taxon>Chordata</taxon>
        <taxon>Craniata</taxon>
        <taxon>Vertebrata</taxon>
        <taxon>Euteleostomi</taxon>
        <taxon>Mammalia</taxon>
        <taxon>Eutheria</taxon>
        <taxon>Afrotheria</taxon>
        <taxon>Hyracoidea</taxon>
        <taxon>Procaviidae</taxon>
        <taxon>Procavia</taxon>
    </lineage>
</organism>
<name>HBD_PROCA</name>
<evidence type="ECO:0000255" key="1">
    <source>
        <dbReference type="PROSITE-ProRule" id="PRU00238"/>
    </source>
</evidence>
<proteinExistence type="evidence at transcript level"/>
<protein>
    <recommendedName>
        <fullName>Hemoglobin subunit deltaH</fullName>
    </recommendedName>
    <alternativeName>
        <fullName>DeltaH-globin</fullName>
    </alternativeName>
    <alternativeName>
        <fullName>Hemoglobin deltaH chain</fullName>
    </alternativeName>
</protein>
<keyword id="KW-0349">Heme</keyword>
<keyword id="KW-0408">Iron</keyword>
<keyword id="KW-0479">Metal-binding</keyword>
<keyword id="KW-0561">Oxygen transport</keyword>
<keyword id="KW-0813">Transport</keyword>
<dbReference type="EMBL" id="DQ091205">
    <property type="protein sequence ID" value="AAZ22678.1"/>
    <property type="molecule type" value="Genomic_DNA"/>
</dbReference>
<dbReference type="SMR" id="Q45XI6"/>
<dbReference type="GO" id="GO:0072562">
    <property type="term" value="C:blood microparticle"/>
    <property type="evidence" value="ECO:0007669"/>
    <property type="project" value="TreeGrafter"/>
</dbReference>
<dbReference type="GO" id="GO:0031838">
    <property type="term" value="C:haptoglobin-hemoglobin complex"/>
    <property type="evidence" value="ECO:0007669"/>
    <property type="project" value="TreeGrafter"/>
</dbReference>
<dbReference type="GO" id="GO:0005833">
    <property type="term" value="C:hemoglobin complex"/>
    <property type="evidence" value="ECO:0007669"/>
    <property type="project" value="InterPro"/>
</dbReference>
<dbReference type="GO" id="GO:0031720">
    <property type="term" value="F:haptoglobin binding"/>
    <property type="evidence" value="ECO:0007669"/>
    <property type="project" value="TreeGrafter"/>
</dbReference>
<dbReference type="GO" id="GO:0020037">
    <property type="term" value="F:heme binding"/>
    <property type="evidence" value="ECO:0007669"/>
    <property type="project" value="InterPro"/>
</dbReference>
<dbReference type="GO" id="GO:0031721">
    <property type="term" value="F:hemoglobin alpha binding"/>
    <property type="evidence" value="ECO:0007669"/>
    <property type="project" value="TreeGrafter"/>
</dbReference>
<dbReference type="GO" id="GO:0046872">
    <property type="term" value="F:metal ion binding"/>
    <property type="evidence" value="ECO:0007669"/>
    <property type="project" value="UniProtKB-KW"/>
</dbReference>
<dbReference type="GO" id="GO:0043177">
    <property type="term" value="F:organic acid binding"/>
    <property type="evidence" value="ECO:0007669"/>
    <property type="project" value="TreeGrafter"/>
</dbReference>
<dbReference type="GO" id="GO:0019825">
    <property type="term" value="F:oxygen binding"/>
    <property type="evidence" value="ECO:0007669"/>
    <property type="project" value="InterPro"/>
</dbReference>
<dbReference type="GO" id="GO:0005344">
    <property type="term" value="F:oxygen carrier activity"/>
    <property type="evidence" value="ECO:0007669"/>
    <property type="project" value="UniProtKB-KW"/>
</dbReference>
<dbReference type="GO" id="GO:0004601">
    <property type="term" value="F:peroxidase activity"/>
    <property type="evidence" value="ECO:0007669"/>
    <property type="project" value="TreeGrafter"/>
</dbReference>
<dbReference type="GO" id="GO:0042744">
    <property type="term" value="P:hydrogen peroxide catabolic process"/>
    <property type="evidence" value="ECO:0007669"/>
    <property type="project" value="TreeGrafter"/>
</dbReference>
<dbReference type="CDD" id="cd08925">
    <property type="entry name" value="Hb-beta-like"/>
    <property type="match status" value="1"/>
</dbReference>
<dbReference type="FunFam" id="1.10.490.10:FF:000001">
    <property type="entry name" value="Hemoglobin subunit beta"/>
    <property type="match status" value="1"/>
</dbReference>
<dbReference type="Gene3D" id="1.10.490.10">
    <property type="entry name" value="Globins"/>
    <property type="match status" value="1"/>
</dbReference>
<dbReference type="InterPro" id="IPR000971">
    <property type="entry name" value="Globin"/>
</dbReference>
<dbReference type="InterPro" id="IPR009050">
    <property type="entry name" value="Globin-like_sf"/>
</dbReference>
<dbReference type="InterPro" id="IPR012292">
    <property type="entry name" value="Globin/Proto"/>
</dbReference>
<dbReference type="InterPro" id="IPR002337">
    <property type="entry name" value="Hemoglobin_b"/>
</dbReference>
<dbReference type="InterPro" id="IPR050056">
    <property type="entry name" value="Hemoglobin_oxygen_transport"/>
</dbReference>
<dbReference type="PANTHER" id="PTHR11442">
    <property type="entry name" value="HEMOGLOBIN FAMILY MEMBER"/>
    <property type="match status" value="1"/>
</dbReference>
<dbReference type="PANTHER" id="PTHR11442:SF42">
    <property type="entry name" value="HEMOGLOBIN SUBUNIT BETA"/>
    <property type="match status" value="1"/>
</dbReference>
<dbReference type="Pfam" id="PF00042">
    <property type="entry name" value="Globin"/>
    <property type="match status" value="1"/>
</dbReference>
<dbReference type="PRINTS" id="PR00814">
    <property type="entry name" value="BETAHAEM"/>
</dbReference>
<dbReference type="SUPFAM" id="SSF46458">
    <property type="entry name" value="Globin-like"/>
    <property type="match status" value="1"/>
</dbReference>
<dbReference type="PROSITE" id="PS01033">
    <property type="entry name" value="GLOBIN"/>
    <property type="match status" value="1"/>
</dbReference>
<comment type="subunit">
    <text>Heterotetramer of two delta chains and two alpha chains.</text>
</comment>
<comment type="tissue specificity">
    <text>Red blood cells.</text>
</comment>
<comment type="similarity">
    <text evidence="1">Belongs to the globin family.</text>
</comment>
<sequence length="147" mass="16556">MVRLTDSEKAEVVSLWSKVDEKIIGSEALGRLLVIYPWTRRFFEHFGDLSTADAILKNPRVQAHGEKVLSSFGEGLNHLDNLRGTFAQLSELHCDELHVDPENFRLLGNILVVVLARHYGKEFTLEVQAACQKFVAGMANALAHKYH</sequence>
<reference key="1">
    <citation type="submission" date="2005-06" db="EMBL/GenBank/DDBJ databases">
        <title>Atypical molecular evolution of afrotherian and xenarthran beta-globin cluster genes.</title>
        <authorList>
            <person name="Sloan A.M."/>
            <person name="Campbell K.L."/>
        </authorList>
    </citation>
    <scope>NUCLEOTIDE SEQUENCE [GENOMIC DNA]</scope>
</reference>
<feature type="chain" id="PRO_0000053180" description="Hemoglobin subunit deltaH">
    <location>
        <begin position="1"/>
        <end position="147"/>
    </location>
</feature>
<feature type="domain" description="Globin" evidence="1">
    <location>
        <begin position="3"/>
        <end position="147"/>
    </location>
</feature>
<feature type="binding site" description="distal binding residue">
    <location>
        <position position="64"/>
    </location>
    <ligand>
        <name>heme b</name>
        <dbReference type="ChEBI" id="CHEBI:60344"/>
    </ligand>
    <ligandPart>
        <name>Fe</name>
        <dbReference type="ChEBI" id="CHEBI:18248"/>
    </ligandPart>
</feature>
<feature type="binding site" description="proximal binding residue">
    <location>
        <position position="93"/>
    </location>
    <ligand>
        <name>heme b</name>
        <dbReference type="ChEBI" id="CHEBI:60344"/>
    </ligand>
    <ligandPart>
        <name>Fe</name>
        <dbReference type="ChEBI" id="CHEBI:18248"/>
    </ligandPart>
</feature>